<dbReference type="EMBL" id="CP000849">
    <property type="protein sequence ID" value="ABV78489.1"/>
    <property type="molecule type" value="Genomic_DNA"/>
</dbReference>
<dbReference type="RefSeq" id="WP_012151515.1">
    <property type="nucleotide sequence ID" value="NC_009883.1"/>
</dbReference>
<dbReference type="SMR" id="A8GUJ3"/>
<dbReference type="KEGG" id="rbo:A1I_00415"/>
<dbReference type="HOGENOM" id="CLU_041018_0_2_5"/>
<dbReference type="GO" id="GO:0005886">
    <property type="term" value="C:plasma membrane"/>
    <property type="evidence" value="ECO:0007669"/>
    <property type="project" value="UniProtKB-SubCell"/>
</dbReference>
<dbReference type="GO" id="GO:0045259">
    <property type="term" value="C:proton-transporting ATP synthase complex"/>
    <property type="evidence" value="ECO:0007669"/>
    <property type="project" value="UniProtKB-KW"/>
</dbReference>
<dbReference type="GO" id="GO:0046933">
    <property type="term" value="F:proton-transporting ATP synthase activity, rotational mechanism"/>
    <property type="evidence" value="ECO:0007669"/>
    <property type="project" value="UniProtKB-UniRule"/>
</dbReference>
<dbReference type="CDD" id="cd00310">
    <property type="entry name" value="ATP-synt_Fo_a_6"/>
    <property type="match status" value="1"/>
</dbReference>
<dbReference type="FunFam" id="1.20.120.220:FF:000003">
    <property type="entry name" value="ATP synthase subunit a"/>
    <property type="match status" value="1"/>
</dbReference>
<dbReference type="Gene3D" id="1.20.120.220">
    <property type="entry name" value="ATP synthase, F0 complex, subunit A"/>
    <property type="match status" value="1"/>
</dbReference>
<dbReference type="HAMAP" id="MF_01393">
    <property type="entry name" value="ATP_synth_a_bact"/>
    <property type="match status" value="1"/>
</dbReference>
<dbReference type="InterPro" id="IPR000568">
    <property type="entry name" value="ATP_synth_F0_asu"/>
</dbReference>
<dbReference type="InterPro" id="IPR023011">
    <property type="entry name" value="ATP_synth_F0_asu_AS"/>
</dbReference>
<dbReference type="InterPro" id="IPR045083">
    <property type="entry name" value="ATP_synth_F0_asu_bact/mt"/>
</dbReference>
<dbReference type="InterPro" id="IPR035908">
    <property type="entry name" value="F0_ATP_A_sf"/>
</dbReference>
<dbReference type="NCBIfam" id="TIGR01131">
    <property type="entry name" value="ATP_synt_6_or_A"/>
    <property type="match status" value="1"/>
</dbReference>
<dbReference type="NCBIfam" id="NF004482">
    <property type="entry name" value="PRK05815.2-4"/>
    <property type="match status" value="1"/>
</dbReference>
<dbReference type="PANTHER" id="PTHR11410">
    <property type="entry name" value="ATP SYNTHASE SUBUNIT A"/>
    <property type="match status" value="1"/>
</dbReference>
<dbReference type="PANTHER" id="PTHR11410:SF0">
    <property type="entry name" value="ATP SYNTHASE SUBUNIT A"/>
    <property type="match status" value="1"/>
</dbReference>
<dbReference type="Pfam" id="PF00119">
    <property type="entry name" value="ATP-synt_A"/>
    <property type="match status" value="1"/>
</dbReference>
<dbReference type="PRINTS" id="PR00123">
    <property type="entry name" value="ATPASEA"/>
</dbReference>
<dbReference type="SUPFAM" id="SSF81336">
    <property type="entry name" value="F1F0 ATP synthase subunit A"/>
    <property type="match status" value="1"/>
</dbReference>
<dbReference type="PROSITE" id="PS00449">
    <property type="entry name" value="ATPASE_A"/>
    <property type="match status" value="1"/>
</dbReference>
<accession>A8GUJ3</accession>
<reference key="1">
    <citation type="submission" date="2007-09" db="EMBL/GenBank/DDBJ databases">
        <title>Complete genome sequencing of Rickettsia bellii.</title>
        <authorList>
            <person name="Madan A."/>
            <person name="Lee H."/>
            <person name="Madan A."/>
            <person name="Yoon J.-G."/>
            <person name="Ryu G.-Y."/>
            <person name="Dasch G."/>
            <person name="Ereemeva M."/>
        </authorList>
    </citation>
    <scope>NUCLEOTIDE SEQUENCE [LARGE SCALE GENOMIC DNA]</scope>
    <source>
        <strain>OSU 85-389</strain>
    </source>
</reference>
<name>ATP6_RICB8</name>
<proteinExistence type="inferred from homology"/>
<gene>
    <name evidence="1" type="primary">atpB</name>
    <name type="ordered locus">A1I_00415</name>
</gene>
<organism>
    <name type="scientific">Rickettsia bellii (strain OSU 85-389)</name>
    <dbReference type="NCBI Taxonomy" id="391896"/>
    <lineage>
        <taxon>Bacteria</taxon>
        <taxon>Pseudomonadati</taxon>
        <taxon>Pseudomonadota</taxon>
        <taxon>Alphaproteobacteria</taxon>
        <taxon>Rickettsiales</taxon>
        <taxon>Rickettsiaceae</taxon>
        <taxon>Rickettsieae</taxon>
        <taxon>Rickettsia</taxon>
        <taxon>belli group</taxon>
    </lineage>
</organism>
<protein>
    <recommendedName>
        <fullName evidence="1">ATP synthase subunit a</fullName>
    </recommendedName>
    <alternativeName>
        <fullName evidence="1">ATP synthase F0 sector subunit a</fullName>
    </alternativeName>
    <alternativeName>
        <fullName evidence="1">F-ATPase subunit 6</fullName>
    </alternativeName>
</protein>
<sequence length="242" mass="27319">MLHNPLVQFDIKKLIDIKVMDFDISFTNSAAYMLLASVLALTYFYLAFSNPRLVPSRLQISGEIIYNLVTDMLNQNVGSKGRKFVPVIFTLFVFILFCNLFGMIPYGFTVTSHIIITFALAILVFLMVTIVGFVKHGMHFLSLFLPHGTPLWLAPLMIIIELFTYLARPASLSLRLAANMMAGHILLKVIASFVITLMIYLKFLPIPLMVILIGFEIFVAILQAYIFTILSCVYLNDAVNLH</sequence>
<comment type="function">
    <text evidence="1">Key component of the proton channel; it plays a direct role in the translocation of protons across the membrane.</text>
</comment>
<comment type="subunit">
    <text evidence="1">F-type ATPases have 2 components, CF(1) - the catalytic core - and CF(0) - the membrane proton channel. CF(1) has five subunits: alpha(3), beta(3), gamma(1), delta(1), epsilon(1). CF(0) has three main subunits: a(1), b(2) and c(9-12). The alpha and beta chains form an alternating ring which encloses part of the gamma chain. CF(1) is attached to CF(0) by a central stalk formed by the gamma and epsilon chains, while a peripheral stalk is formed by the delta and b chains.</text>
</comment>
<comment type="subcellular location">
    <subcellularLocation>
        <location evidence="1">Cell inner membrane</location>
        <topology evidence="1">Multi-pass membrane protein</topology>
    </subcellularLocation>
</comment>
<comment type="similarity">
    <text evidence="1">Belongs to the ATPase A chain family.</text>
</comment>
<evidence type="ECO:0000255" key="1">
    <source>
        <dbReference type="HAMAP-Rule" id="MF_01393"/>
    </source>
</evidence>
<keyword id="KW-0066">ATP synthesis</keyword>
<keyword id="KW-0997">Cell inner membrane</keyword>
<keyword id="KW-1003">Cell membrane</keyword>
<keyword id="KW-0138">CF(0)</keyword>
<keyword id="KW-0375">Hydrogen ion transport</keyword>
<keyword id="KW-0406">Ion transport</keyword>
<keyword id="KW-0472">Membrane</keyword>
<keyword id="KW-0812">Transmembrane</keyword>
<keyword id="KW-1133">Transmembrane helix</keyword>
<keyword id="KW-0813">Transport</keyword>
<feature type="chain" id="PRO_0000362424" description="ATP synthase subunit a">
    <location>
        <begin position="1"/>
        <end position="242"/>
    </location>
</feature>
<feature type="transmembrane region" description="Helical" evidence="1">
    <location>
        <begin position="29"/>
        <end position="49"/>
    </location>
</feature>
<feature type="transmembrane region" description="Helical" evidence="1">
    <location>
        <begin position="84"/>
        <end position="104"/>
    </location>
</feature>
<feature type="transmembrane region" description="Helical" evidence="1">
    <location>
        <begin position="114"/>
        <end position="134"/>
    </location>
</feature>
<feature type="transmembrane region" description="Helical" evidence="1">
    <location>
        <begin position="140"/>
        <end position="160"/>
    </location>
</feature>
<feature type="transmembrane region" description="Helical" evidence="1">
    <location>
        <begin position="189"/>
        <end position="209"/>
    </location>
</feature>
<feature type="transmembrane region" description="Helical" evidence="1">
    <location>
        <begin position="210"/>
        <end position="230"/>
    </location>
</feature>